<name>RS9_STACT</name>
<protein>
    <recommendedName>
        <fullName evidence="2">Small ribosomal subunit protein uS9</fullName>
    </recommendedName>
    <alternativeName>
        <fullName>30S ribosomal protein S9</fullName>
    </alternativeName>
</protein>
<gene>
    <name type="primary">rpsI</name>
    <name type="ordered locus">Sca_1702</name>
</gene>
<dbReference type="EMBL" id="AM295250">
    <property type="protein sequence ID" value="CAL28608.1"/>
    <property type="molecule type" value="Genomic_DNA"/>
</dbReference>
<dbReference type="EMBL" id="X63912">
    <property type="status" value="NOT_ANNOTATED_CDS"/>
    <property type="molecule type" value="Genomic_DNA"/>
</dbReference>
<dbReference type="RefSeq" id="WP_015900948.1">
    <property type="nucleotide sequence ID" value="NC_012121.1"/>
</dbReference>
<dbReference type="SMR" id="P31177"/>
<dbReference type="GeneID" id="93794161"/>
<dbReference type="KEGG" id="sca:SCA_1702"/>
<dbReference type="eggNOG" id="COG0103">
    <property type="taxonomic scope" value="Bacteria"/>
</dbReference>
<dbReference type="HOGENOM" id="CLU_046483_2_1_9"/>
<dbReference type="BioCyc" id="SCAR396513:SCA_RS08675-MONOMER"/>
<dbReference type="Proteomes" id="UP000000444">
    <property type="component" value="Chromosome"/>
</dbReference>
<dbReference type="GO" id="GO:0022627">
    <property type="term" value="C:cytosolic small ribosomal subunit"/>
    <property type="evidence" value="ECO:0007669"/>
    <property type="project" value="TreeGrafter"/>
</dbReference>
<dbReference type="GO" id="GO:0003723">
    <property type="term" value="F:RNA binding"/>
    <property type="evidence" value="ECO:0007669"/>
    <property type="project" value="TreeGrafter"/>
</dbReference>
<dbReference type="GO" id="GO:0003735">
    <property type="term" value="F:structural constituent of ribosome"/>
    <property type="evidence" value="ECO:0007669"/>
    <property type="project" value="InterPro"/>
</dbReference>
<dbReference type="GO" id="GO:0006412">
    <property type="term" value="P:translation"/>
    <property type="evidence" value="ECO:0007669"/>
    <property type="project" value="UniProtKB-UniRule"/>
</dbReference>
<dbReference type="FunFam" id="3.30.230.10:FF:000001">
    <property type="entry name" value="30S ribosomal protein S9"/>
    <property type="match status" value="1"/>
</dbReference>
<dbReference type="Gene3D" id="3.30.230.10">
    <property type="match status" value="1"/>
</dbReference>
<dbReference type="HAMAP" id="MF_00532_B">
    <property type="entry name" value="Ribosomal_uS9_B"/>
    <property type="match status" value="1"/>
</dbReference>
<dbReference type="InterPro" id="IPR020568">
    <property type="entry name" value="Ribosomal_Su5_D2-typ_SF"/>
</dbReference>
<dbReference type="InterPro" id="IPR000754">
    <property type="entry name" value="Ribosomal_uS9"/>
</dbReference>
<dbReference type="InterPro" id="IPR023035">
    <property type="entry name" value="Ribosomal_uS9_bac/plastid"/>
</dbReference>
<dbReference type="InterPro" id="IPR020574">
    <property type="entry name" value="Ribosomal_uS9_CS"/>
</dbReference>
<dbReference type="InterPro" id="IPR014721">
    <property type="entry name" value="Ribsml_uS5_D2-typ_fold_subgr"/>
</dbReference>
<dbReference type="NCBIfam" id="NF001099">
    <property type="entry name" value="PRK00132.1"/>
    <property type="match status" value="1"/>
</dbReference>
<dbReference type="PANTHER" id="PTHR21569">
    <property type="entry name" value="RIBOSOMAL PROTEIN S9"/>
    <property type="match status" value="1"/>
</dbReference>
<dbReference type="PANTHER" id="PTHR21569:SF1">
    <property type="entry name" value="SMALL RIBOSOMAL SUBUNIT PROTEIN US9M"/>
    <property type="match status" value="1"/>
</dbReference>
<dbReference type="Pfam" id="PF00380">
    <property type="entry name" value="Ribosomal_S9"/>
    <property type="match status" value="1"/>
</dbReference>
<dbReference type="SUPFAM" id="SSF54211">
    <property type="entry name" value="Ribosomal protein S5 domain 2-like"/>
    <property type="match status" value="1"/>
</dbReference>
<dbReference type="PROSITE" id="PS00360">
    <property type="entry name" value="RIBOSOMAL_S9"/>
    <property type="match status" value="1"/>
</dbReference>
<organism>
    <name type="scientific">Staphylococcus carnosus (strain TM300)</name>
    <dbReference type="NCBI Taxonomy" id="396513"/>
    <lineage>
        <taxon>Bacteria</taxon>
        <taxon>Bacillati</taxon>
        <taxon>Bacillota</taxon>
        <taxon>Bacilli</taxon>
        <taxon>Bacillales</taxon>
        <taxon>Staphylococcaceae</taxon>
        <taxon>Staphylococcus</taxon>
    </lineage>
</organism>
<proteinExistence type="inferred from homology"/>
<sequence length="130" mass="14632">MAQVEYRGTGRRKNSVARVRLVPGEGNITVNGKDVREYLPFESLILDLNQPFEVTETKGNYDVLVNVHGGGFTGQAQAIRHGIARALLEADPEYRSSLKRAGLLTRDPRMKERKKPGLKKARRSPQFSKR</sequence>
<evidence type="ECO:0000256" key="1">
    <source>
        <dbReference type="SAM" id="MobiDB-lite"/>
    </source>
</evidence>
<evidence type="ECO:0000305" key="2"/>
<reference key="1">
    <citation type="journal article" date="2009" name="Appl. Environ. Microbiol.">
        <title>Genome analysis of the meat starter culture bacterium Staphylococcus carnosus TM300.</title>
        <authorList>
            <person name="Rosenstein R."/>
            <person name="Nerz C."/>
            <person name="Biswas L."/>
            <person name="Resch A."/>
            <person name="Raddatz G."/>
            <person name="Schuster S.C."/>
            <person name="Goetz F."/>
        </authorList>
    </citation>
    <scope>NUCLEOTIDE SEQUENCE [LARGE SCALE GENOMIC DNA]</scope>
    <source>
        <strain>TM300</strain>
    </source>
</reference>
<reference key="2">
    <citation type="journal article" date="1991" name="FEMS Microbiol. Lett.">
        <title>Suppression of an Escherichia coli secA(ts) mutant by a gene cloned from Staphylococcus carnosus.</title>
        <authorList>
            <person name="Overhoff-Freundlieb B."/>
            <person name="Freudl R."/>
        </authorList>
    </citation>
    <scope>NUCLEOTIDE SEQUENCE [GENOMIC DNA] OF 1-40</scope>
</reference>
<feature type="chain" id="PRO_0000111414" description="Small ribosomal subunit protein uS9">
    <location>
        <begin position="1"/>
        <end position="130"/>
    </location>
</feature>
<feature type="region of interest" description="Disordered" evidence="1">
    <location>
        <begin position="98"/>
        <end position="130"/>
    </location>
</feature>
<feature type="compositionally biased region" description="Basic residues" evidence="1">
    <location>
        <begin position="111"/>
        <end position="130"/>
    </location>
</feature>
<keyword id="KW-1185">Reference proteome</keyword>
<keyword id="KW-0687">Ribonucleoprotein</keyword>
<keyword id="KW-0689">Ribosomal protein</keyword>
<accession>P31177</accession>
<accession>B9DM44</accession>
<comment type="similarity">
    <text evidence="2">Belongs to the universal ribosomal protein uS9 family.</text>
</comment>